<name>GPAT3_HUMAN</name>
<comment type="function">
    <text evidence="4 5 6">Converts glycerol-3-phosphate to 1-acyl-sn-glycerol-3-phosphate (lysophosphatidic acid or LPA) by incorporating an acyl moiety at the sn-1 position of the glycerol backbone (PubMed:17170135). Also converts LPA into 1,2-diacyl-sn-glycerol-3-phosphate (phosphatidic acid or PA) by incorporating an acyl moiety at the sn-2 position of the glycerol backbone (PubMed:19318427). Protects cells against lipotoxicity (PubMed:30846318).</text>
</comment>
<comment type="catalytic activity">
    <reaction evidence="4">
        <text>sn-glycerol 3-phosphate + an acyl-CoA = a 1-acyl-sn-glycero-3-phosphate + CoA</text>
        <dbReference type="Rhea" id="RHEA:15325"/>
        <dbReference type="ChEBI" id="CHEBI:57287"/>
        <dbReference type="ChEBI" id="CHEBI:57597"/>
        <dbReference type="ChEBI" id="CHEBI:57970"/>
        <dbReference type="ChEBI" id="CHEBI:58342"/>
        <dbReference type="EC" id="2.3.1.15"/>
    </reaction>
    <physiologicalReaction direction="left-to-right" evidence="9">
        <dbReference type="Rhea" id="RHEA:15326"/>
    </physiologicalReaction>
</comment>
<comment type="catalytic activity">
    <reaction evidence="5">
        <text>a 1-acyl-sn-glycero-3-phosphate + an acyl-CoA = a 1,2-diacyl-sn-glycero-3-phosphate + CoA</text>
        <dbReference type="Rhea" id="RHEA:19709"/>
        <dbReference type="ChEBI" id="CHEBI:57287"/>
        <dbReference type="ChEBI" id="CHEBI:57970"/>
        <dbReference type="ChEBI" id="CHEBI:58342"/>
        <dbReference type="ChEBI" id="CHEBI:58608"/>
        <dbReference type="EC" id="2.3.1.51"/>
    </reaction>
    <physiologicalReaction direction="left-to-right" evidence="10">
        <dbReference type="Rhea" id="RHEA:19710"/>
    </physiologicalReaction>
</comment>
<comment type="catalytic activity">
    <reaction evidence="4">
        <text>dodecanoyl-CoA + sn-glycerol 3-phosphate = 1-dodecanoyl-sn-glycerol 3-phosphate + CoA</text>
        <dbReference type="Rhea" id="RHEA:35727"/>
        <dbReference type="ChEBI" id="CHEBI:57287"/>
        <dbReference type="ChEBI" id="CHEBI:57375"/>
        <dbReference type="ChEBI" id="CHEBI:57597"/>
        <dbReference type="ChEBI" id="CHEBI:72682"/>
    </reaction>
    <physiologicalReaction direction="left-to-right" evidence="9">
        <dbReference type="Rhea" id="RHEA:35728"/>
    </physiologicalReaction>
</comment>
<comment type="catalytic activity">
    <reaction evidence="4">
        <text>sn-glycerol 3-phosphate + hexadecanoyl-CoA = 1-hexadecanoyl-sn-glycero-3-phosphate + CoA</text>
        <dbReference type="Rhea" id="RHEA:35723"/>
        <dbReference type="ChEBI" id="CHEBI:57287"/>
        <dbReference type="ChEBI" id="CHEBI:57379"/>
        <dbReference type="ChEBI" id="CHEBI:57518"/>
        <dbReference type="ChEBI" id="CHEBI:57597"/>
    </reaction>
    <physiologicalReaction direction="left-to-right" evidence="9">
        <dbReference type="Rhea" id="RHEA:35724"/>
    </physiologicalReaction>
</comment>
<comment type="catalytic activity">
    <reaction evidence="4">
        <text>sn-glycerol 3-phosphate + (9Z)-octadecenoyl-CoA = 1-(9Z-octadecenoyl)-sn-glycero-3-phosphate + CoA</text>
        <dbReference type="Rhea" id="RHEA:37199"/>
        <dbReference type="ChEBI" id="CHEBI:57287"/>
        <dbReference type="ChEBI" id="CHEBI:57387"/>
        <dbReference type="ChEBI" id="CHEBI:57597"/>
        <dbReference type="ChEBI" id="CHEBI:74544"/>
    </reaction>
    <physiologicalReaction direction="left-to-right" evidence="9">
        <dbReference type="Rhea" id="RHEA:37200"/>
    </physiologicalReaction>
</comment>
<comment type="catalytic activity">
    <reaction evidence="4">
        <text>(9Z,12Z)-octadecadienoyl-CoA + sn-glycerol 3-phosphate = 1-(9Z,12Z)-octadecadienoyl-sn-glycero-3-phosphate + CoA</text>
        <dbReference type="Rhea" id="RHEA:37203"/>
        <dbReference type="ChEBI" id="CHEBI:57287"/>
        <dbReference type="ChEBI" id="CHEBI:57383"/>
        <dbReference type="ChEBI" id="CHEBI:57597"/>
        <dbReference type="ChEBI" id="CHEBI:74547"/>
    </reaction>
    <physiologicalReaction direction="left-to-right" evidence="9">
        <dbReference type="Rhea" id="RHEA:37204"/>
    </physiologicalReaction>
</comment>
<comment type="catalytic activity">
    <reaction evidence="5">
        <text>1-tetradecanoyl-sn-glycerol 3-phosphate + (9Z)-octadecenoyl-CoA = 1-tetradecanoyl-2-(9Z)-octadecenoyl-sn-glycero-3-phosphate + CoA</text>
        <dbReference type="Rhea" id="RHEA:37187"/>
        <dbReference type="ChEBI" id="CHEBI:57287"/>
        <dbReference type="ChEBI" id="CHEBI:57387"/>
        <dbReference type="ChEBI" id="CHEBI:72683"/>
        <dbReference type="ChEBI" id="CHEBI:74586"/>
    </reaction>
    <physiologicalReaction direction="left-to-right" evidence="10">
        <dbReference type="Rhea" id="RHEA:37188"/>
    </physiologicalReaction>
</comment>
<comment type="catalytic activity">
    <reaction evidence="5">
        <text>1-hexadecanoyl-sn-glycero-3-phosphate + (9Z)-octadecenoyl-CoA = 1-hexadecanoyl-2-(9Z-octadecenoyl)-sn-glycero-3-phosphate + CoA</text>
        <dbReference type="Rhea" id="RHEA:33187"/>
        <dbReference type="ChEBI" id="CHEBI:57287"/>
        <dbReference type="ChEBI" id="CHEBI:57387"/>
        <dbReference type="ChEBI" id="CHEBI:57518"/>
        <dbReference type="ChEBI" id="CHEBI:64839"/>
    </reaction>
    <physiologicalReaction direction="left-to-right" evidence="10">
        <dbReference type="Rhea" id="RHEA:33188"/>
    </physiologicalReaction>
</comment>
<comment type="catalytic activity">
    <reaction evidence="5">
        <text>1-(9Z-octadecenoyl)-sn-glycero-3-phosphate + (9Z)-octadecenoyl-CoA = 1,2-di-(9Z-octadecenoyl)-sn-glycero-3-phosphate + CoA</text>
        <dbReference type="Rhea" id="RHEA:37131"/>
        <dbReference type="ChEBI" id="CHEBI:57287"/>
        <dbReference type="ChEBI" id="CHEBI:57387"/>
        <dbReference type="ChEBI" id="CHEBI:74544"/>
        <dbReference type="ChEBI" id="CHEBI:74546"/>
    </reaction>
    <physiologicalReaction direction="left-to-right" evidence="10">
        <dbReference type="Rhea" id="RHEA:37132"/>
    </physiologicalReaction>
</comment>
<comment type="catalytic activity">
    <reaction evidence="5">
        <text>1-(6Z,9Z,12Z-octadecatrienoyl)-sn-glycero-3-phosphate + (9Z)-octadecenoyl-CoA = (6Z,9Z,12Z)-octadecatrienoyl-2-(9Z)-octadecenoyl-sn-glycero-3-phosphate + CoA</text>
        <dbReference type="Rhea" id="RHEA:37179"/>
        <dbReference type="ChEBI" id="CHEBI:57287"/>
        <dbReference type="ChEBI" id="CHEBI:57387"/>
        <dbReference type="ChEBI" id="CHEBI:74581"/>
        <dbReference type="ChEBI" id="CHEBI:74582"/>
    </reaction>
    <physiologicalReaction direction="left-to-right" evidence="10">
        <dbReference type="Rhea" id="RHEA:37180"/>
    </physiologicalReaction>
</comment>
<comment type="catalytic activity">
    <reaction evidence="5">
        <text>1-(9Z,12Z,15Z)-octadecatrienoyl-sn-glycero-3-phosphate + (9Z)-octadecenoyl-CoA = 1-(9Z,12Z,15Z)-octadecatrienoyl-2-(9Z)-octadecenoyl-sn-glycero-3-phosphate + CoA</text>
        <dbReference type="Rhea" id="RHEA:37139"/>
        <dbReference type="ChEBI" id="CHEBI:57287"/>
        <dbReference type="ChEBI" id="CHEBI:57387"/>
        <dbReference type="ChEBI" id="CHEBI:74549"/>
        <dbReference type="ChEBI" id="CHEBI:74550"/>
    </reaction>
    <physiologicalReaction direction="left-to-right" evidence="10">
        <dbReference type="Rhea" id="RHEA:37140"/>
    </physiologicalReaction>
</comment>
<comment type="catalytic activity">
    <reaction evidence="5">
        <text>1-(9Z-octadecenoyl)-sn-glycero-3-phosphate + tetradecanoyl-CoA = 1-(9Z)-octadecenoyl-2-tetradecanoyl-sn-glycero-3-phosphate + CoA</text>
        <dbReference type="Rhea" id="RHEA:37171"/>
        <dbReference type="ChEBI" id="CHEBI:57287"/>
        <dbReference type="ChEBI" id="CHEBI:57385"/>
        <dbReference type="ChEBI" id="CHEBI:74544"/>
        <dbReference type="ChEBI" id="CHEBI:74579"/>
    </reaction>
    <physiologicalReaction direction="left-to-right" evidence="10">
        <dbReference type="Rhea" id="RHEA:37172"/>
    </physiologicalReaction>
</comment>
<comment type="catalytic activity">
    <reaction evidence="5">
        <text>1-(9Z-octadecenoyl)-sn-glycero-3-phosphate + hexadecanoyl-CoA = 1-(9Z)-octadecenoyl-2-hexadecanoyl-sn-glycero-3-phosphate + CoA</text>
        <dbReference type="Rhea" id="RHEA:37143"/>
        <dbReference type="ChEBI" id="CHEBI:57287"/>
        <dbReference type="ChEBI" id="CHEBI:57379"/>
        <dbReference type="ChEBI" id="CHEBI:74544"/>
        <dbReference type="ChEBI" id="CHEBI:74551"/>
    </reaction>
    <physiologicalReaction direction="left-to-right" evidence="10">
        <dbReference type="Rhea" id="RHEA:37144"/>
    </physiologicalReaction>
</comment>
<comment type="catalytic activity">
    <reaction evidence="5">
        <text>1-(9Z-octadecenoyl)-sn-glycero-3-phosphate + octadecanoyl-CoA = 1-(9Z-octadecenoyl)-2-octadecanoyl-sn-glycero-3-phosphate + CoA</text>
        <dbReference type="Rhea" id="RHEA:37147"/>
        <dbReference type="ChEBI" id="CHEBI:57287"/>
        <dbReference type="ChEBI" id="CHEBI:57394"/>
        <dbReference type="ChEBI" id="CHEBI:74544"/>
        <dbReference type="ChEBI" id="CHEBI:74552"/>
    </reaction>
    <physiologicalReaction direction="left-to-right" evidence="10">
        <dbReference type="Rhea" id="RHEA:37148"/>
    </physiologicalReaction>
</comment>
<comment type="catalytic activity">
    <reaction evidence="5">
        <text>1-(9Z-octadecenoyl)-sn-glycero-3-phosphate + (9Z,12Z)-octadecadienoyl-CoA = 1-(9Z)-octadecenoyl-2-(9Z,12Z)-octadecadienoyl-sn-glycero-3-phosphate + CoA</text>
        <dbReference type="Rhea" id="RHEA:37159"/>
        <dbReference type="ChEBI" id="CHEBI:57287"/>
        <dbReference type="ChEBI" id="CHEBI:57383"/>
        <dbReference type="ChEBI" id="CHEBI:74544"/>
        <dbReference type="ChEBI" id="CHEBI:74563"/>
    </reaction>
    <physiologicalReaction direction="left-to-right" evidence="10">
        <dbReference type="Rhea" id="RHEA:37160"/>
    </physiologicalReaction>
</comment>
<comment type="catalytic activity">
    <reaction evidence="5">
        <text>1-(5Z,8Z,11Z,14Z-eicosatetraenoyl)-sn-glycero-3-phosphate + (9Z)-octadecenoyl-CoA = 1-(5Z,8Z,11Z,14Z)-eicosatetraenoyl-2-(9Z)-octadecenoyl-sn-glycero-3-phosphate + CoA</text>
        <dbReference type="Rhea" id="RHEA:37455"/>
        <dbReference type="ChEBI" id="CHEBI:57287"/>
        <dbReference type="ChEBI" id="CHEBI:57387"/>
        <dbReference type="ChEBI" id="CHEBI:74938"/>
        <dbReference type="ChEBI" id="CHEBI:74941"/>
    </reaction>
    <physiologicalReaction direction="left-to-right" evidence="10">
        <dbReference type="Rhea" id="RHEA:37456"/>
    </physiologicalReaction>
</comment>
<comment type="activity regulation">
    <text evidence="4">Inhibited by N-ethylmaleimide (NEM).</text>
</comment>
<comment type="biophysicochemical properties">
    <kinetics>
        <KM evidence="5">9.2 uM for 1-oleoyl-lysophosphatidic acid</KM>
        <KM evidence="5">60 uM for 1-oleoyl-CoA</KM>
        <Vmax evidence="5">14.19 nmol/min/mg enzyme for 1-oleoyl-lysophosphatidic acid</Vmax>
        <Vmax evidence="5">2.7 nmol/min/mg enzyme for 1-oleoyl-CoA</Vmax>
    </kinetics>
</comment>
<comment type="pathway">
    <text>Glycerolipid metabolism; triacylglycerol biosynthesis.</text>
</comment>
<comment type="pathway">
    <text>Phospholipid metabolism; CDP-diacylglycerol biosynthesis; CDP-diacylglycerol from sn-glycerol 3-phosphate: step 1/3.</text>
</comment>
<comment type="subcellular location">
    <subcellularLocation>
        <location evidence="3 5">Endoplasmic reticulum membrane</location>
        <topology evidence="2">Multi-pass membrane protein</topology>
    </subcellularLocation>
</comment>
<comment type="tissue specificity">
    <text evidence="3 4 5">Widely expressed. Expressed in liver, kidney, testis, brain, heart, skeletal muscle, thyroid, prostate, thymus and placenta. Also expressed lung and adipose tissue.</text>
</comment>
<comment type="domain">
    <text evidence="1">The HXXXXD motif is essential for acyltransferase activity and may constitute the binding site for the phosphate moiety of the glycerol-3-phosphate.</text>
</comment>
<comment type="similarity">
    <text evidence="8">Belongs to the 1-acyl-sn-glycerol-3-phosphate acyltransferase family.</text>
</comment>
<accession>Q53EU6</accession>
<accession>Q68CJ4</accession>
<accession>Q6GPI6</accession>
<accession>Q96NA3</accession>
<proteinExistence type="evidence at protein level"/>
<organism>
    <name type="scientific">Homo sapiens</name>
    <name type="common">Human</name>
    <dbReference type="NCBI Taxonomy" id="9606"/>
    <lineage>
        <taxon>Eukaryota</taxon>
        <taxon>Metazoa</taxon>
        <taxon>Chordata</taxon>
        <taxon>Craniata</taxon>
        <taxon>Vertebrata</taxon>
        <taxon>Euteleostomi</taxon>
        <taxon>Mammalia</taxon>
        <taxon>Eutheria</taxon>
        <taxon>Euarchontoglires</taxon>
        <taxon>Primates</taxon>
        <taxon>Haplorrhini</taxon>
        <taxon>Catarrhini</taxon>
        <taxon>Hominidae</taxon>
        <taxon>Homo</taxon>
    </lineage>
</organism>
<gene>
    <name evidence="11" type="primary">GPAT3</name>
    <name type="synonym">AGPAT9</name>
    <name type="synonym">MAG1</name>
    <name type="ORF">HMFN0839</name>
    <name type="ORF">UNQ2753/PRO6492</name>
</gene>
<keyword id="KW-0012">Acyltransferase</keyword>
<keyword id="KW-0256">Endoplasmic reticulum</keyword>
<keyword id="KW-0444">Lipid biosynthesis</keyword>
<keyword id="KW-0443">Lipid metabolism</keyword>
<keyword id="KW-0472">Membrane</keyword>
<keyword id="KW-0594">Phospholipid biosynthesis</keyword>
<keyword id="KW-1208">Phospholipid metabolism</keyword>
<keyword id="KW-0597">Phosphoprotein</keyword>
<keyword id="KW-1267">Proteomics identification</keyword>
<keyword id="KW-1185">Reference proteome</keyword>
<keyword id="KW-0808">Transferase</keyword>
<keyword id="KW-0812">Transmembrane</keyword>
<keyword id="KW-1133">Transmembrane helix</keyword>
<sequence>MEGAELAGKILSTWLTLVLGFILLPSVFGVSLGISEIYMKILVKTLEWATIRIEKGTPKESILKNSASVGIIQRDESPMEKGLSGLRGRDFELSDVFYFSKKGLEAIVEDEVTQRFSSEELVSWNLLTRTNVNFQYISLRLTMVWVLGVIVRYCVLLPLRVTLAFIGISLLVIGTTLVGQLPDSSLKNWLSELVHLTCCRICVRALSGTIHYHNKQYRPQKGGICVANHTSPIDVLILTTDGCYAMVGQVHGGLMGIIQRAMVKACPHVWFERSEMKDRHLVTKRLKEHIADKKKLPILIFPEGTCINNTSVMMFKKGSFEIGGTIHPVAIKYNPQFGDAFWNSSKYNMVSYLLRMMTSWAIVCDVWYMPPMTREEGEDAVQFANRVKSAIAIQGGLTELPWDGGLKRAKVKDIFKEEQQKNYSKMIVGNGSLS</sequence>
<evidence type="ECO:0000250" key="1">
    <source>
        <dbReference type="UniProtKB" id="Q9D517"/>
    </source>
</evidence>
<evidence type="ECO:0000255" key="2"/>
<evidence type="ECO:0000269" key="3">
    <source>
    </source>
</evidence>
<evidence type="ECO:0000269" key="4">
    <source>
    </source>
</evidence>
<evidence type="ECO:0000269" key="5">
    <source>
    </source>
</evidence>
<evidence type="ECO:0000269" key="6">
    <source>
    </source>
</evidence>
<evidence type="ECO:0000303" key="7">
    <source>
    </source>
</evidence>
<evidence type="ECO:0000305" key="8"/>
<evidence type="ECO:0000305" key="9">
    <source>
    </source>
</evidence>
<evidence type="ECO:0000305" key="10">
    <source>
    </source>
</evidence>
<evidence type="ECO:0000312" key="11">
    <source>
        <dbReference type="HGNC" id="HGNC:28157"/>
    </source>
</evidence>
<evidence type="ECO:0007744" key="12">
    <source>
    </source>
</evidence>
<evidence type="ECO:0007744" key="13">
    <source>
    </source>
</evidence>
<evidence type="ECO:0007744" key="14">
    <source>
    </source>
</evidence>
<protein>
    <recommendedName>
        <fullName evidence="11">Glycerol-3-phosphate acyltransferase 3</fullName>
        <shortName>GPAT-3</shortName>
        <ecNumber evidence="4">2.3.1.15</ecNumber>
    </recommendedName>
    <alternativeName>
        <fullName evidence="7">1-acyl-sn-glycerol-3-phosphate O-acyltransferase 10</fullName>
        <shortName evidence="7">AGPAT 10</shortName>
    </alternativeName>
    <alternativeName>
        <fullName>1-acyl-sn-glycerol-3-phosphate O-acyltransferase 9</fullName>
        <shortName>1-AGP acyltransferase 9</shortName>
        <shortName>1-AGPAT 9</shortName>
        <ecNumber evidence="5">2.3.1.51</ecNumber>
    </alternativeName>
    <alternativeName>
        <fullName evidence="7">Acyl-CoA:glycerol-3-phosphate acyltransferase 3</fullName>
        <shortName evidence="7">hGPAT3</shortName>
    </alternativeName>
    <alternativeName>
        <fullName>Lung cancer metastasis-associated protein 1</fullName>
    </alternativeName>
    <alternativeName>
        <fullName>Lysophosphatidic acid acyltransferase theta</fullName>
        <shortName>LPAAT-theta</shortName>
    </alternativeName>
    <alternativeName>
        <fullName>MAG-1</fullName>
    </alternativeName>
</protein>
<dbReference type="EC" id="2.3.1.15" evidence="4"/>
<dbReference type="EC" id="2.3.1.51" evidence="5"/>
<dbReference type="EMBL" id="DQ324782">
    <property type="protein sequence ID" value="ABC55674.1"/>
    <property type="molecule type" value="mRNA"/>
</dbReference>
<dbReference type="EMBL" id="DQ345298">
    <property type="protein sequence ID" value="ABC70186.1"/>
    <property type="molecule type" value="mRNA"/>
</dbReference>
<dbReference type="EMBL" id="AY358100">
    <property type="protein sequence ID" value="AAQ88467.1"/>
    <property type="molecule type" value="mRNA"/>
</dbReference>
<dbReference type="EMBL" id="AK055749">
    <property type="protein sequence ID" value="BAB71002.1"/>
    <property type="molecule type" value="mRNA"/>
</dbReference>
<dbReference type="EMBL" id="AK223543">
    <property type="protein sequence ID" value="BAD97263.1"/>
    <property type="molecule type" value="mRNA"/>
</dbReference>
<dbReference type="EMBL" id="BC073136">
    <property type="protein sequence ID" value="AAH73136.1"/>
    <property type="molecule type" value="mRNA"/>
</dbReference>
<dbReference type="EMBL" id="BC090956">
    <property type="protein sequence ID" value="AAH90956.1"/>
    <property type="molecule type" value="mRNA"/>
</dbReference>
<dbReference type="EMBL" id="AB075872">
    <property type="protein sequence ID" value="BAD38654.1"/>
    <property type="molecule type" value="mRNA"/>
</dbReference>
<dbReference type="CCDS" id="CCDS3606.1"/>
<dbReference type="RefSeq" id="NP_001243350.1">
    <property type="nucleotide sequence ID" value="NM_001256421.1"/>
</dbReference>
<dbReference type="RefSeq" id="NP_001243351.1">
    <property type="nucleotide sequence ID" value="NM_001256422.1"/>
</dbReference>
<dbReference type="RefSeq" id="NP_116106.2">
    <property type="nucleotide sequence ID" value="NM_032717.4"/>
</dbReference>
<dbReference type="RefSeq" id="XP_016864270.1">
    <property type="nucleotide sequence ID" value="XM_017008781.2"/>
</dbReference>
<dbReference type="RefSeq" id="XP_054207094.1">
    <property type="nucleotide sequence ID" value="XM_054351119.1"/>
</dbReference>
<dbReference type="BioGRID" id="124267">
    <property type="interactions" value="154"/>
</dbReference>
<dbReference type="FunCoup" id="Q53EU6">
    <property type="interactions" value="1301"/>
</dbReference>
<dbReference type="IntAct" id="Q53EU6">
    <property type="interactions" value="44"/>
</dbReference>
<dbReference type="MINT" id="Q53EU6"/>
<dbReference type="STRING" id="9606.ENSP00000264409"/>
<dbReference type="ChEMBL" id="CHEMBL4523318"/>
<dbReference type="SwissLipids" id="SLP:000000290"/>
<dbReference type="iPTMnet" id="Q53EU6"/>
<dbReference type="PhosphoSitePlus" id="Q53EU6"/>
<dbReference type="BioMuta" id="GPAT3"/>
<dbReference type="DMDM" id="150403919"/>
<dbReference type="jPOST" id="Q53EU6"/>
<dbReference type="MassIVE" id="Q53EU6"/>
<dbReference type="PaxDb" id="9606-ENSP00000482571"/>
<dbReference type="PeptideAtlas" id="Q53EU6"/>
<dbReference type="ProteomicsDB" id="62449"/>
<dbReference type="Pumba" id="Q53EU6"/>
<dbReference type="Antibodypedia" id="25231">
    <property type="antibodies" value="217 antibodies from 27 providers"/>
</dbReference>
<dbReference type="DNASU" id="84803"/>
<dbReference type="Ensembl" id="ENST00000264409.5">
    <property type="protein sequence ID" value="ENSP00000264409.4"/>
    <property type="gene ID" value="ENSG00000138678.11"/>
</dbReference>
<dbReference type="Ensembl" id="ENST00000395226.6">
    <property type="protein sequence ID" value="ENSP00000378651.2"/>
    <property type="gene ID" value="ENSG00000138678.11"/>
</dbReference>
<dbReference type="Ensembl" id="ENST00000611707.4">
    <property type="protein sequence ID" value="ENSP00000482571.1"/>
    <property type="gene ID" value="ENSG00000138678.11"/>
</dbReference>
<dbReference type="GeneID" id="84803"/>
<dbReference type="KEGG" id="hsa:84803"/>
<dbReference type="MANE-Select" id="ENST00000264409.5">
    <property type="protein sequence ID" value="ENSP00000264409.4"/>
    <property type="RefSeq nucleotide sequence ID" value="NM_032717.5"/>
    <property type="RefSeq protein sequence ID" value="NP_116106.2"/>
</dbReference>
<dbReference type="UCSC" id="uc003how.5">
    <property type="organism name" value="human"/>
</dbReference>
<dbReference type="AGR" id="HGNC:28157"/>
<dbReference type="CTD" id="84803"/>
<dbReference type="DisGeNET" id="84803"/>
<dbReference type="GeneCards" id="GPAT3"/>
<dbReference type="HGNC" id="HGNC:28157">
    <property type="gene designation" value="GPAT3"/>
</dbReference>
<dbReference type="HPA" id="ENSG00000138678">
    <property type="expression patterns" value="Tissue enhanced (kidney)"/>
</dbReference>
<dbReference type="MIM" id="610958">
    <property type="type" value="gene"/>
</dbReference>
<dbReference type="neXtProt" id="NX_Q53EU6"/>
<dbReference type="OpenTargets" id="ENSG00000138678"/>
<dbReference type="PharmGKB" id="PA162375888"/>
<dbReference type="VEuPathDB" id="HostDB:ENSG00000138678"/>
<dbReference type="eggNOG" id="KOG2898">
    <property type="taxonomic scope" value="Eukaryota"/>
</dbReference>
<dbReference type="GeneTree" id="ENSGT01030000234574"/>
<dbReference type="HOGENOM" id="CLU_031080_0_1_1"/>
<dbReference type="InParanoid" id="Q53EU6"/>
<dbReference type="OMA" id="PPMVREE"/>
<dbReference type="OrthoDB" id="10051137at2759"/>
<dbReference type="PAN-GO" id="Q53EU6">
    <property type="GO annotations" value="0 GO annotations based on evolutionary models"/>
</dbReference>
<dbReference type="PhylomeDB" id="Q53EU6"/>
<dbReference type="TreeFam" id="TF315039"/>
<dbReference type="BRENDA" id="2.3.1.15">
    <property type="organism ID" value="2681"/>
</dbReference>
<dbReference type="PathwayCommons" id="Q53EU6"/>
<dbReference type="Reactome" id="R-HSA-1483166">
    <property type="pathway name" value="Synthesis of PA"/>
</dbReference>
<dbReference type="SABIO-RK" id="Q53EU6"/>
<dbReference type="SignaLink" id="Q53EU6"/>
<dbReference type="UniPathway" id="UPA00282"/>
<dbReference type="UniPathway" id="UPA00557">
    <property type="reaction ID" value="UER00612"/>
</dbReference>
<dbReference type="BioGRID-ORCS" id="84803">
    <property type="hits" value="6 hits in 1140 CRISPR screens"/>
</dbReference>
<dbReference type="ChiTaRS" id="GPAT3">
    <property type="organism name" value="human"/>
</dbReference>
<dbReference type="GeneWiki" id="AGPAT9"/>
<dbReference type="GenomeRNAi" id="84803"/>
<dbReference type="Pharos" id="Q53EU6">
    <property type="development level" value="Tbio"/>
</dbReference>
<dbReference type="PRO" id="PR:Q53EU6"/>
<dbReference type="Proteomes" id="UP000005640">
    <property type="component" value="Chromosome 4"/>
</dbReference>
<dbReference type="RNAct" id="Q53EU6">
    <property type="molecule type" value="protein"/>
</dbReference>
<dbReference type="Bgee" id="ENSG00000138678">
    <property type="expression patterns" value="Expressed in kidney epithelium and 177 other cell types or tissues"/>
</dbReference>
<dbReference type="ExpressionAtlas" id="Q53EU6">
    <property type="expression patterns" value="baseline and differential"/>
</dbReference>
<dbReference type="GO" id="GO:0005783">
    <property type="term" value="C:endoplasmic reticulum"/>
    <property type="evidence" value="ECO:0000314"/>
    <property type="project" value="UniProtKB"/>
</dbReference>
<dbReference type="GO" id="GO:0005789">
    <property type="term" value="C:endoplasmic reticulum membrane"/>
    <property type="evidence" value="ECO:0000314"/>
    <property type="project" value="UniProtKB"/>
</dbReference>
<dbReference type="GO" id="GO:0003841">
    <property type="term" value="F:1-acylglycerol-3-phosphate O-acyltransferase activity"/>
    <property type="evidence" value="ECO:0000314"/>
    <property type="project" value="UniProtKB"/>
</dbReference>
<dbReference type="GO" id="GO:0004366">
    <property type="term" value="F:glycerol-3-phosphate O-acyltransferase activity"/>
    <property type="evidence" value="ECO:0000314"/>
    <property type="project" value="UniProtKB"/>
</dbReference>
<dbReference type="GO" id="GO:0016024">
    <property type="term" value="P:CDP-diacylglycerol biosynthetic process"/>
    <property type="evidence" value="ECO:0007669"/>
    <property type="project" value="UniProtKB-UniPathway"/>
</dbReference>
<dbReference type="GO" id="GO:0006072">
    <property type="term" value="P:glycerol-3-phosphate metabolic process"/>
    <property type="evidence" value="ECO:0007669"/>
    <property type="project" value="Ensembl"/>
</dbReference>
<dbReference type="GO" id="GO:0006654">
    <property type="term" value="P:phosphatidic acid biosynthetic process"/>
    <property type="evidence" value="ECO:0000304"/>
    <property type="project" value="Reactome"/>
</dbReference>
<dbReference type="GO" id="GO:0032006">
    <property type="term" value="P:regulation of TOR signaling"/>
    <property type="evidence" value="ECO:0000314"/>
    <property type="project" value="UniProtKB"/>
</dbReference>
<dbReference type="GO" id="GO:0019432">
    <property type="term" value="P:triglyceride biosynthetic process"/>
    <property type="evidence" value="ECO:0000314"/>
    <property type="project" value="UniProtKB"/>
</dbReference>
<dbReference type="CDD" id="cd07991">
    <property type="entry name" value="LPLAT_LPCAT1-like"/>
    <property type="match status" value="1"/>
</dbReference>
<dbReference type="InterPro" id="IPR045252">
    <property type="entry name" value="LPCAT1-like"/>
</dbReference>
<dbReference type="InterPro" id="IPR002123">
    <property type="entry name" value="Plipid/glycerol_acylTrfase"/>
</dbReference>
<dbReference type="PANTHER" id="PTHR23063:SF10">
    <property type="entry name" value="GLYCEROL-3-PHOSPHATE ACYLTRANSFERASE 3"/>
    <property type="match status" value="1"/>
</dbReference>
<dbReference type="PANTHER" id="PTHR23063">
    <property type="entry name" value="PHOSPHOLIPID ACYLTRANSFERASE"/>
    <property type="match status" value="1"/>
</dbReference>
<dbReference type="Pfam" id="PF01553">
    <property type="entry name" value="Acyltransferase"/>
    <property type="match status" value="1"/>
</dbReference>
<dbReference type="SMART" id="SM00563">
    <property type="entry name" value="PlsC"/>
    <property type="match status" value="1"/>
</dbReference>
<dbReference type="SUPFAM" id="SSF69593">
    <property type="entry name" value="Glycerol-3-phosphate (1)-acyltransferase"/>
    <property type="match status" value="1"/>
</dbReference>
<reference key="1">
    <citation type="journal article" date="2003" name="Zhongguo Fei Ai Za Zhi">
        <title>Identification of metastasis associated genes MAG-1 and MAG-2.</title>
        <authorList>
            <person name="Zhang J."/>
            <person name="Meng Y."/>
            <person name="Du Z."/>
            <person name="Chen Z."/>
            <person name="Ling X."/>
            <person name="Xu Y."/>
            <person name="Lu Y."/>
        </authorList>
    </citation>
    <scope>NUCLEOTIDE SEQUENCE [MRNA]</scope>
</reference>
<reference key="2">
    <citation type="journal article" date="2006" name="J. Biochem. Mol. Biol.">
        <title>Identification of a novel human lysophosphatidic acid acyltransferase, LPAAT-theta, which activates mTOR pathway.</title>
        <authorList>
            <person name="Tang W."/>
            <person name="Yuan J."/>
            <person name="Chen X."/>
            <person name="Gu X."/>
            <person name="Luo K."/>
            <person name="Li J."/>
            <person name="Wan B."/>
            <person name="Wang Y."/>
            <person name="Yu L."/>
        </authorList>
    </citation>
    <scope>NUCLEOTIDE SEQUENCE [MRNA]</scope>
    <scope>SUBCELLULAR LOCATION</scope>
    <scope>TISSUE SPECIFICITY</scope>
</reference>
<reference key="3">
    <citation type="journal article" date="2003" name="Genome Res.">
        <title>The secreted protein discovery initiative (SPDI), a large-scale effort to identify novel human secreted and transmembrane proteins: a bioinformatics assessment.</title>
        <authorList>
            <person name="Clark H.F."/>
            <person name="Gurney A.L."/>
            <person name="Abaya E."/>
            <person name="Baker K."/>
            <person name="Baldwin D.T."/>
            <person name="Brush J."/>
            <person name="Chen J."/>
            <person name="Chow B."/>
            <person name="Chui C."/>
            <person name="Crowley C."/>
            <person name="Currell B."/>
            <person name="Deuel B."/>
            <person name="Dowd P."/>
            <person name="Eaton D."/>
            <person name="Foster J.S."/>
            <person name="Grimaldi C."/>
            <person name="Gu Q."/>
            <person name="Hass P.E."/>
            <person name="Heldens S."/>
            <person name="Huang A."/>
            <person name="Kim H.S."/>
            <person name="Klimowski L."/>
            <person name="Jin Y."/>
            <person name="Johnson S."/>
            <person name="Lee J."/>
            <person name="Lewis L."/>
            <person name="Liao D."/>
            <person name="Mark M.R."/>
            <person name="Robbie E."/>
            <person name="Sanchez C."/>
            <person name="Schoenfeld J."/>
            <person name="Seshagiri S."/>
            <person name="Simmons L."/>
            <person name="Singh J."/>
            <person name="Smith V."/>
            <person name="Stinson J."/>
            <person name="Vagts A."/>
            <person name="Vandlen R.L."/>
            <person name="Watanabe C."/>
            <person name="Wieand D."/>
            <person name="Woods K."/>
            <person name="Xie M.-H."/>
            <person name="Yansura D.G."/>
            <person name="Yi S."/>
            <person name="Yu G."/>
            <person name="Yuan J."/>
            <person name="Zhang M."/>
            <person name="Zhang Z."/>
            <person name="Goddard A.D."/>
            <person name="Wood W.I."/>
            <person name="Godowski P.J."/>
            <person name="Gray A.M."/>
        </authorList>
    </citation>
    <scope>NUCLEOTIDE SEQUENCE [LARGE SCALE MRNA]</scope>
</reference>
<reference key="4">
    <citation type="journal article" date="2004" name="Nat. Genet.">
        <title>Complete sequencing and characterization of 21,243 full-length human cDNAs.</title>
        <authorList>
            <person name="Ota T."/>
            <person name="Suzuki Y."/>
            <person name="Nishikawa T."/>
            <person name="Otsuki T."/>
            <person name="Sugiyama T."/>
            <person name="Irie R."/>
            <person name="Wakamatsu A."/>
            <person name="Hayashi K."/>
            <person name="Sato H."/>
            <person name="Nagai K."/>
            <person name="Kimura K."/>
            <person name="Makita H."/>
            <person name="Sekine M."/>
            <person name="Obayashi M."/>
            <person name="Nishi T."/>
            <person name="Shibahara T."/>
            <person name="Tanaka T."/>
            <person name="Ishii S."/>
            <person name="Yamamoto J."/>
            <person name="Saito K."/>
            <person name="Kawai Y."/>
            <person name="Isono Y."/>
            <person name="Nakamura Y."/>
            <person name="Nagahari K."/>
            <person name="Murakami K."/>
            <person name="Yasuda T."/>
            <person name="Iwayanagi T."/>
            <person name="Wagatsuma M."/>
            <person name="Shiratori A."/>
            <person name="Sudo H."/>
            <person name="Hosoiri T."/>
            <person name="Kaku Y."/>
            <person name="Kodaira H."/>
            <person name="Kondo H."/>
            <person name="Sugawara M."/>
            <person name="Takahashi M."/>
            <person name="Kanda K."/>
            <person name="Yokoi T."/>
            <person name="Furuya T."/>
            <person name="Kikkawa E."/>
            <person name="Omura Y."/>
            <person name="Abe K."/>
            <person name="Kamihara K."/>
            <person name="Katsuta N."/>
            <person name="Sato K."/>
            <person name="Tanikawa M."/>
            <person name="Yamazaki M."/>
            <person name="Ninomiya K."/>
            <person name="Ishibashi T."/>
            <person name="Yamashita H."/>
            <person name="Murakawa K."/>
            <person name="Fujimori K."/>
            <person name="Tanai H."/>
            <person name="Kimata M."/>
            <person name="Watanabe M."/>
            <person name="Hiraoka S."/>
            <person name="Chiba Y."/>
            <person name="Ishida S."/>
            <person name="Ono Y."/>
            <person name="Takiguchi S."/>
            <person name="Watanabe S."/>
            <person name="Yosida M."/>
            <person name="Hotuta T."/>
            <person name="Kusano J."/>
            <person name="Kanehori K."/>
            <person name="Takahashi-Fujii A."/>
            <person name="Hara H."/>
            <person name="Tanase T.-O."/>
            <person name="Nomura Y."/>
            <person name="Togiya S."/>
            <person name="Komai F."/>
            <person name="Hara R."/>
            <person name="Takeuchi K."/>
            <person name="Arita M."/>
            <person name="Imose N."/>
            <person name="Musashino K."/>
            <person name="Yuuki H."/>
            <person name="Oshima A."/>
            <person name="Sasaki N."/>
            <person name="Aotsuka S."/>
            <person name="Yoshikawa Y."/>
            <person name="Matsunawa H."/>
            <person name="Ichihara T."/>
            <person name="Shiohata N."/>
            <person name="Sano S."/>
            <person name="Moriya S."/>
            <person name="Momiyama H."/>
            <person name="Satoh N."/>
            <person name="Takami S."/>
            <person name="Terashima Y."/>
            <person name="Suzuki O."/>
            <person name="Nakagawa S."/>
            <person name="Senoh A."/>
            <person name="Mizoguchi H."/>
            <person name="Goto Y."/>
            <person name="Shimizu F."/>
            <person name="Wakebe H."/>
            <person name="Hishigaki H."/>
            <person name="Watanabe T."/>
            <person name="Sugiyama A."/>
            <person name="Takemoto M."/>
            <person name="Kawakami B."/>
            <person name="Yamazaki M."/>
            <person name="Watanabe K."/>
            <person name="Kumagai A."/>
            <person name="Itakura S."/>
            <person name="Fukuzumi Y."/>
            <person name="Fujimori Y."/>
            <person name="Komiyama M."/>
            <person name="Tashiro H."/>
            <person name="Tanigami A."/>
            <person name="Fujiwara T."/>
            <person name="Ono T."/>
            <person name="Yamada K."/>
            <person name="Fujii Y."/>
            <person name="Ozaki K."/>
            <person name="Hirao M."/>
            <person name="Ohmori Y."/>
            <person name="Kawabata A."/>
            <person name="Hikiji T."/>
            <person name="Kobatake N."/>
            <person name="Inagaki H."/>
            <person name="Ikema Y."/>
            <person name="Okamoto S."/>
            <person name="Okitani R."/>
            <person name="Kawakami T."/>
            <person name="Noguchi S."/>
            <person name="Itoh T."/>
            <person name="Shigeta K."/>
            <person name="Senba T."/>
            <person name="Matsumura K."/>
            <person name="Nakajima Y."/>
            <person name="Mizuno T."/>
            <person name="Morinaga M."/>
            <person name="Sasaki M."/>
            <person name="Togashi T."/>
            <person name="Oyama M."/>
            <person name="Hata H."/>
            <person name="Watanabe M."/>
            <person name="Komatsu T."/>
            <person name="Mizushima-Sugano J."/>
            <person name="Satoh T."/>
            <person name="Shirai Y."/>
            <person name="Takahashi Y."/>
            <person name="Nakagawa K."/>
            <person name="Okumura K."/>
            <person name="Nagase T."/>
            <person name="Nomura N."/>
            <person name="Kikuchi H."/>
            <person name="Masuho Y."/>
            <person name="Yamashita R."/>
            <person name="Nakai K."/>
            <person name="Yada T."/>
            <person name="Nakamura Y."/>
            <person name="Ohara O."/>
            <person name="Isogai T."/>
            <person name="Sugano S."/>
        </authorList>
    </citation>
    <scope>NUCLEOTIDE SEQUENCE [LARGE SCALE MRNA]</scope>
    <source>
        <tissue>Kidney</tissue>
    </source>
</reference>
<reference key="5">
    <citation type="submission" date="2005-04" db="EMBL/GenBank/DDBJ databases">
        <authorList>
            <person name="Totoki Y."/>
            <person name="Toyoda A."/>
            <person name="Takeda T."/>
            <person name="Sakaki Y."/>
            <person name="Tanaka A."/>
            <person name="Yokoyama S."/>
        </authorList>
    </citation>
    <scope>NUCLEOTIDE SEQUENCE [LARGE SCALE MRNA]</scope>
    <source>
        <tissue>Kidney</tissue>
    </source>
</reference>
<reference key="6">
    <citation type="journal article" date="2004" name="Genome Res.">
        <title>The status, quality, and expansion of the NIH full-length cDNA project: the Mammalian Gene Collection (MGC).</title>
        <authorList>
            <consortium name="The MGC Project Team"/>
        </authorList>
    </citation>
    <scope>NUCLEOTIDE SEQUENCE [LARGE SCALE MRNA]</scope>
    <source>
        <tissue>PNS</tissue>
        <tissue>Testis</tissue>
    </source>
</reference>
<reference key="7">
    <citation type="journal article" date="2004" name="Oncogene">
        <title>Expression profiling and differential screening between hepatoblastomas and the corresponding normal livers: identification of high expression of the PLK1 oncogene as a poor-prognostic indicator of hepatoblastomas.</title>
        <authorList>
            <person name="Yamada S."/>
            <person name="Ohira M."/>
            <person name="Horie H."/>
            <person name="Ando K."/>
            <person name="Takayasu H."/>
            <person name="Suzuki Y."/>
            <person name="Sugano S."/>
            <person name="Hirata T."/>
            <person name="Goto T."/>
            <person name="Matsunaga T."/>
            <person name="Hiyama E."/>
            <person name="Hayashi Y."/>
            <person name="Ando H."/>
            <person name="Suita S."/>
            <person name="Kaneko M."/>
            <person name="Sasaki F."/>
            <person name="Hashizume K."/>
            <person name="Ohnuma N."/>
            <person name="Nakagawara A."/>
        </authorList>
    </citation>
    <scope>NUCLEOTIDE SEQUENCE [LARGE SCALE MRNA] OF 167-434</scope>
</reference>
<reference key="8">
    <citation type="journal article" date="2006" name="Proc. Natl. Acad. Sci. U.S.A.">
        <title>Molecular identification of microsomal acyl-CoA:glycerol-3-phosphate acyltransferase, a key enzyme in de novo triacylglycerol synthesis.</title>
        <authorList>
            <person name="Cao J."/>
            <person name="Li J.-L."/>
            <person name="Li D."/>
            <person name="Tobin J.F."/>
            <person name="Gimeno R.E."/>
        </authorList>
    </citation>
    <scope>FUNCTION</scope>
    <scope>CATALYTIC ACTIVITY</scope>
    <scope>ACTIVITY REGULATION</scope>
    <scope>TISSUE SPECIFICITY</scope>
</reference>
<reference key="9">
    <citation type="journal article" date="2008" name="Proc. Natl. Acad. Sci. U.S.A.">
        <title>A quantitative atlas of mitotic phosphorylation.</title>
        <authorList>
            <person name="Dephoure N."/>
            <person name="Zhou C."/>
            <person name="Villen J."/>
            <person name="Beausoleil S.A."/>
            <person name="Bakalarski C.E."/>
            <person name="Elledge S.J."/>
            <person name="Gygi S.P."/>
        </authorList>
    </citation>
    <scope>PHOSPHORYLATION [LARGE SCALE ANALYSIS] AT SER-68 AND SER-77</scope>
    <scope>IDENTIFICATION BY MASS SPECTROMETRY [LARGE SCALE ANALYSIS]</scope>
    <source>
        <tissue>Cervix carcinoma</tissue>
    </source>
</reference>
<reference key="10">
    <citation type="journal article" date="2009" name="J. Mol. Endocrinol.">
        <title>Functional characterization of the human 1-acylglycerol-3-phosphate-O-acyltransferase isoform 10/glycerol-3-phosphate acyltransferase isoform 3.</title>
        <authorList>
            <person name="Sukumaran S."/>
            <person name="Barnes R.I."/>
            <person name="Garg A."/>
            <person name="Agarwal A.K."/>
        </authorList>
    </citation>
    <scope>FUNCTION</scope>
    <scope>CATALYTIC ACTIVITY</scope>
    <scope>BIOPHYSICOCHEMICAL PROPERTIES</scope>
    <scope>PATHWAY</scope>
    <scope>SUBCELLULAR LOCATION</scope>
    <scope>TISSUE SPECIFICITY</scope>
</reference>
<reference key="11">
    <citation type="journal article" date="2013" name="J. Proteome Res.">
        <title>Toward a comprehensive characterization of a human cancer cell phosphoproteome.</title>
        <authorList>
            <person name="Zhou H."/>
            <person name="Di Palma S."/>
            <person name="Preisinger C."/>
            <person name="Peng M."/>
            <person name="Polat A.N."/>
            <person name="Heck A.J."/>
            <person name="Mohammed S."/>
        </authorList>
    </citation>
    <scope>PHOSPHORYLATION [LARGE SCALE ANALYSIS] AT SER-68 AND SER-77</scope>
    <scope>IDENTIFICATION BY MASS SPECTROMETRY [LARGE SCALE ANALYSIS]</scope>
    <source>
        <tissue>Cervix carcinoma</tissue>
        <tissue>Erythroleukemia</tissue>
    </source>
</reference>
<reference key="12">
    <citation type="journal article" date="2014" name="J. Proteomics">
        <title>An enzyme assisted RP-RPLC approach for in-depth analysis of human liver phosphoproteome.</title>
        <authorList>
            <person name="Bian Y."/>
            <person name="Song C."/>
            <person name="Cheng K."/>
            <person name="Dong M."/>
            <person name="Wang F."/>
            <person name="Huang J."/>
            <person name="Sun D."/>
            <person name="Wang L."/>
            <person name="Ye M."/>
            <person name="Zou H."/>
        </authorList>
    </citation>
    <scope>PHOSPHORYLATION [LARGE SCALE ANALYSIS] AT SER-68</scope>
    <scope>IDENTIFICATION BY MASS SPECTROMETRY [LARGE SCALE ANALYSIS]</scope>
    <source>
        <tissue>Liver</tissue>
    </source>
</reference>
<reference key="13">
    <citation type="journal article" date="2019" name="Mol. Cell">
        <title>Probing the global cellular responses to lipotoxicity caused by saturated fatty acids.</title>
        <authorList>
            <person name="Piccolis M."/>
            <person name="Bond L.M."/>
            <person name="Kampmann M."/>
            <person name="Pulimeno P."/>
            <person name="Chitraju C."/>
            <person name="Jayson C.B.K."/>
            <person name="Vaites L.P."/>
            <person name="Boland S."/>
            <person name="Lai Z.W."/>
            <person name="Gabriel K.R."/>
            <person name="Elliott S.D."/>
            <person name="Paulo J.A."/>
            <person name="Harper J.W."/>
            <person name="Weissman J.S."/>
            <person name="Walther T.C."/>
            <person name="Farese R.V. Jr."/>
        </authorList>
    </citation>
    <scope>FUNCTION</scope>
</reference>
<feature type="chain" id="PRO_0000291570" description="Glycerol-3-phosphate acyltransferase 3">
    <location>
        <begin position="1"/>
        <end position="434"/>
    </location>
</feature>
<feature type="transmembrane region" description="Helical" evidence="2">
    <location>
        <begin position="14"/>
        <end position="34"/>
    </location>
</feature>
<feature type="transmembrane region" description="Helical" evidence="2">
    <location>
        <begin position="137"/>
        <end position="157"/>
    </location>
</feature>
<feature type="transmembrane region" description="Helical" evidence="2">
    <location>
        <begin position="161"/>
        <end position="181"/>
    </location>
</feature>
<feature type="short sequence motif" description="HXXXXD motif" evidence="1">
    <location>
        <begin position="229"/>
        <end position="234"/>
    </location>
</feature>
<feature type="modified residue" description="Phosphoserine" evidence="12 13 14">
    <location>
        <position position="68"/>
    </location>
</feature>
<feature type="modified residue" description="Phosphoserine" evidence="12 13">
    <location>
        <position position="77"/>
    </location>
</feature>
<feature type="sequence conflict" description="In Ref. 5; BAD97263." evidence="8" ref="5">
    <original>L</original>
    <variation>I</variation>
    <location>
        <position position="156"/>
    </location>
</feature>